<feature type="chain" id="PRO_1000052329" description="Large ribosomal subunit protein uL24">
    <location>
        <begin position="1"/>
        <end position="77"/>
    </location>
</feature>
<accession>A6QCQ9</accession>
<proteinExistence type="inferred from homology"/>
<protein>
    <recommendedName>
        <fullName evidence="1">Large ribosomal subunit protein uL24</fullName>
    </recommendedName>
    <alternativeName>
        <fullName evidence="2">50S ribosomal protein L24</fullName>
    </alternativeName>
</protein>
<gene>
    <name evidence="1" type="primary">rplX</name>
    <name type="ordered locus">SUN_2332</name>
</gene>
<evidence type="ECO:0000255" key="1">
    <source>
        <dbReference type="HAMAP-Rule" id="MF_01326"/>
    </source>
</evidence>
<evidence type="ECO:0000305" key="2"/>
<dbReference type="EMBL" id="AP009179">
    <property type="protein sequence ID" value="BAF73268.1"/>
    <property type="molecule type" value="Genomic_DNA"/>
</dbReference>
<dbReference type="RefSeq" id="WP_012084109.1">
    <property type="nucleotide sequence ID" value="NC_009663.1"/>
</dbReference>
<dbReference type="SMR" id="A6QCQ9"/>
<dbReference type="STRING" id="387093.SUN_2332"/>
<dbReference type="KEGG" id="sun:SUN_2332"/>
<dbReference type="eggNOG" id="COG0198">
    <property type="taxonomic scope" value="Bacteria"/>
</dbReference>
<dbReference type="HOGENOM" id="CLU_093315_3_0_7"/>
<dbReference type="OrthoDB" id="9807419at2"/>
<dbReference type="Proteomes" id="UP000006378">
    <property type="component" value="Chromosome"/>
</dbReference>
<dbReference type="GO" id="GO:1990904">
    <property type="term" value="C:ribonucleoprotein complex"/>
    <property type="evidence" value="ECO:0007669"/>
    <property type="project" value="UniProtKB-KW"/>
</dbReference>
<dbReference type="GO" id="GO:0005840">
    <property type="term" value="C:ribosome"/>
    <property type="evidence" value="ECO:0007669"/>
    <property type="project" value="UniProtKB-KW"/>
</dbReference>
<dbReference type="GO" id="GO:0019843">
    <property type="term" value="F:rRNA binding"/>
    <property type="evidence" value="ECO:0007669"/>
    <property type="project" value="UniProtKB-UniRule"/>
</dbReference>
<dbReference type="GO" id="GO:0003735">
    <property type="term" value="F:structural constituent of ribosome"/>
    <property type="evidence" value="ECO:0007669"/>
    <property type="project" value="InterPro"/>
</dbReference>
<dbReference type="GO" id="GO:0006412">
    <property type="term" value="P:translation"/>
    <property type="evidence" value="ECO:0007669"/>
    <property type="project" value="UniProtKB-UniRule"/>
</dbReference>
<dbReference type="CDD" id="cd06089">
    <property type="entry name" value="KOW_RPL26"/>
    <property type="match status" value="1"/>
</dbReference>
<dbReference type="Gene3D" id="2.30.30.30">
    <property type="match status" value="1"/>
</dbReference>
<dbReference type="HAMAP" id="MF_01326_B">
    <property type="entry name" value="Ribosomal_uL24_B"/>
    <property type="match status" value="1"/>
</dbReference>
<dbReference type="InterPro" id="IPR005824">
    <property type="entry name" value="KOW"/>
</dbReference>
<dbReference type="InterPro" id="IPR014722">
    <property type="entry name" value="Rib_uL2_dom2"/>
</dbReference>
<dbReference type="InterPro" id="IPR003256">
    <property type="entry name" value="Ribosomal_uL24"/>
</dbReference>
<dbReference type="InterPro" id="IPR005825">
    <property type="entry name" value="Ribosomal_uL24_CS"/>
</dbReference>
<dbReference type="InterPro" id="IPR041988">
    <property type="entry name" value="Ribosomal_uL24_KOW"/>
</dbReference>
<dbReference type="InterPro" id="IPR008991">
    <property type="entry name" value="Translation_prot_SH3-like_sf"/>
</dbReference>
<dbReference type="NCBIfam" id="TIGR01079">
    <property type="entry name" value="rplX_bact"/>
    <property type="match status" value="1"/>
</dbReference>
<dbReference type="PANTHER" id="PTHR12903">
    <property type="entry name" value="MITOCHONDRIAL RIBOSOMAL PROTEIN L24"/>
    <property type="match status" value="1"/>
</dbReference>
<dbReference type="Pfam" id="PF00467">
    <property type="entry name" value="KOW"/>
    <property type="match status" value="1"/>
</dbReference>
<dbReference type="Pfam" id="PF17136">
    <property type="entry name" value="ribosomal_L24"/>
    <property type="match status" value="1"/>
</dbReference>
<dbReference type="SMART" id="SM00739">
    <property type="entry name" value="KOW"/>
    <property type="match status" value="1"/>
</dbReference>
<dbReference type="SUPFAM" id="SSF50104">
    <property type="entry name" value="Translation proteins SH3-like domain"/>
    <property type="match status" value="1"/>
</dbReference>
<dbReference type="PROSITE" id="PS01108">
    <property type="entry name" value="RIBOSOMAL_L24"/>
    <property type="match status" value="1"/>
</dbReference>
<reference key="1">
    <citation type="journal article" date="2007" name="Proc. Natl. Acad. Sci. U.S.A.">
        <title>Deep-sea vent epsilon-proteobacterial genomes provide insights into emergence of pathogens.</title>
        <authorList>
            <person name="Nakagawa S."/>
            <person name="Takaki Y."/>
            <person name="Shimamura S."/>
            <person name="Reysenbach A.-L."/>
            <person name="Takai K."/>
            <person name="Horikoshi K."/>
        </authorList>
    </citation>
    <scope>NUCLEOTIDE SEQUENCE [LARGE SCALE GENOMIC DNA]</scope>
    <source>
        <strain>NBC37-1</strain>
    </source>
</reference>
<sequence length="77" mass="8252">MATKFKIKKGDQVMVIAGDDKGKTGEVLQVLPKKEAVIVAGCKMAKKAIKPSEQNKEGGFANAEMPIHISNVKKVEA</sequence>
<comment type="function">
    <text evidence="1">One of two assembly initiator proteins, it binds directly to the 5'-end of the 23S rRNA, where it nucleates assembly of the 50S subunit.</text>
</comment>
<comment type="function">
    <text evidence="1">One of the proteins that surrounds the polypeptide exit tunnel on the outside of the subunit.</text>
</comment>
<comment type="subunit">
    <text evidence="1">Part of the 50S ribosomal subunit.</text>
</comment>
<comment type="similarity">
    <text evidence="1">Belongs to the universal ribosomal protein uL24 family.</text>
</comment>
<keyword id="KW-0687">Ribonucleoprotein</keyword>
<keyword id="KW-0689">Ribosomal protein</keyword>
<keyword id="KW-0694">RNA-binding</keyword>
<keyword id="KW-0699">rRNA-binding</keyword>
<name>RL24_SULNB</name>
<organism>
    <name type="scientific">Sulfurovum sp. (strain NBC37-1)</name>
    <dbReference type="NCBI Taxonomy" id="387093"/>
    <lineage>
        <taxon>Bacteria</taxon>
        <taxon>Pseudomonadati</taxon>
        <taxon>Campylobacterota</taxon>
        <taxon>Epsilonproteobacteria</taxon>
        <taxon>Campylobacterales</taxon>
        <taxon>Sulfurovaceae</taxon>
        <taxon>Sulfurovum</taxon>
    </lineage>
</organism>